<organism>
    <name type="scientific">Arabidopsis thaliana</name>
    <name type="common">Mouse-ear cress</name>
    <dbReference type="NCBI Taxonomy" id="3702"/>
    <lineage>
        <taxon>Eukaryota</taxon>
        <taxon>Viridiplantae</taxon>
        <taxon>Streptophyta</taxon>
        <taxon>Embryophyta</taxon>
        <taxon>Tracheophyta</taxon>
        <taxon>Spermatophyta</taxon>
        <taxon>Magnoliopsida</taxon>
        <taxon>eudicotyledons</taxon>
        <taxon>Gunneridae</taxon>
        <taxon>Pentapetalae</taxon>
        <taxon>rosids</taxon>
        <taxon>malvids</taxon>
        <taxon>Brassicales</taxon>
        <taxon>Brassicaceae</taxon>
        <taxon>Camelineae</taxon>
        <taxon>Arabidopsis</taxon>
    </lineage>
</organism>
<reference key="1">
    <citation type="journal article" date="2000" name="Nature">
        <title>Sequence and analysis of chromosome 1 of the plant Arabidopsis thaliana.</title>
        <authorList>
            <person name="Theologis A."/>
            <person name="Ecker J.R."/>
            <person name="Palm C.J."/>
            <person name="Federspiel N.A."/>
            <person name="Kaul S."/>
            <person name="White O."/>
            <person name="Alonso J."/>
            <person name="Altafi H."/>
            <person name="Araujo R."/>
            <person name="Bowman C.L."/>
            <person name="Brooks S.Y."/>
            <person name="Buehler E."/>
            <person name="Chan A."/>
            <person name="Chao Q."/>
            <person name="Chen H."/>
            <person name="Cheuk R.F."/>
            <person name="Chin C.W."/>
            <person name="Chung M.K."/>
            <person name="Conn L."/>
            <person name="Conway A.B."/>
            <person name="Conway A.R."/>
            <person name="Creasy T.H."/>
            <person name="Dewar K."/>
            <person name="Dunn P."/>
            <person name="Etgu P."/>
            <person name="Feldblyum T.V."/>
            <person name="Feng J.-D."/>
            <person name="Fong B."/>
            <person name="Fujii C.Y."/>
            <person name="Gill J.E."/>
            <person name="Goldsmith A.D."/>
            <person name="Haas B."/>
            <person name="Hansen N.F."/>
            <person name="Hughes B."/>
            <person name="Huizar L."/>
            <person name="Hunter J.L."/>
            <person name="Jenkins J."/>
            <person name="Johnson-Hopson C."/>
            <person name="Khan S."/>
            <person name="Khaykin E."/>
            <person name="Kim C.J."/>
            <person name="Koo H.L."/>
            <person name="Kremenetskaia I."/>
            <person name="Kurtz D.B."/>
            <person name="Kwan A."/>
            <person name="Lam B."/>
            <person name="Langin-Hooper S."/>
            <person name="Lee A."/>
            <person name="Lee J.M."/>
            <person name="Lenz C.A."/>
            <person name="Li J.H."/>
            <person name="Li Y.-P."/>
            <person name="Lin X."/>
            <person name="Liu S.X."/>
            <person name="Liu Z.A."/>
            <person name="Luros J.S."/>
            <person name="Maiti R."/>
            <person name="Marziali A."/>
            <person name="Militscher J."/>
            <person name="Miranda M."/>
            <person name="Nguyen M."/>
            <person name="Nierman W.C."/>
            <person name="Osborne B.I."/>
            <person name="Pai G."/>
            <person name="Peterson J."/>
            <person name="Pham P.K."/>
            <person name="Rizzo M."/>
            <person name="Rooney T."/>
            <person name="Rowley D."/>
            <person name="Sakano H."/>
            <person name="Salzberg S.L."/>
            <person name="Schwartz J.R."/>
            <person name="Shinn P."/>
            <person name="Southwick A.M."/>
            <person name="Sun H."/>
            <person name="Tallon L.J."/>
            <person name="Tambunga G."/>
            <person name="Toriumi M.J."/>
            <person name="Town C.D."/>
            <person name="Utterback T."/>
            <person name="Van Aken S."/>
            <person name="Vaysberg M."/>
            <person name="Vysotskaia V.S."/>
            <person name="Walker M."/>
            <person name="Wu D."/>
            <person name="Yu G."/>
            <person name="Fraser C.M."/>
            <person name="Venter J.C."/>
            <person name="Davis R.W."/>
        </authorList>
    </citation>
    <scope>NUCLEOTIDE SEQUENCE [LARGE SCALE GENOMIC DNA]</scope>
    <source>
        <strain>cv. Columbia</strain>
    </source>
</reference>
<reference key="2">
    <citation type="journal article" date="2017" name="Plant J.">
        <title>Araport11: a complete reannotation of the Arabidopsis thaliana reference genome.</title>
        <authorList>
            <person name="Cheng C.Y."/>
            <person name="Krishnakumar V."/>
            <person name="Chan A.P."/>
            <person name="Thibaud-Nissen F."/>
            <person name="Schobel S."/>
            <person name="Town C.D."/>
        </authorList>
    </citation>
    <scope>GENOME REANNOTATION</scope>
    <source>
        <strain>cv. Columbia</strain>
    </source>
</reference>
<reference key="3">
    <citation type="journal article" date="2002" name="Science">
        <title>Functional annotation of a full-length Arabidopsis cDNA collection.</title>
        <authorList>
            <person name="Seki M."/>
            <person name="Narusaka M."/>
            <person name="Kamiya A."/>
            <person name="Ishida J."/>
            <person name="Satou M."/>
            <person name="Sakurai T."/>
            <person name="Nakajima M."/>
            <person name="Enju A."/>
            <person name="Akiyama K."/>
            <person name="Oono Y."/>
            <person name="Muramatsu M."/>
            <person name="Hayashizaki Y."/>
            <person name="Kawai J."/>
            <person name="Carninci P."/>
            <person name="Itoh M."/>
            <person name="Ishii Y."/>
            <person name="Arakawa T."/>
            <person name="Shibata K."/>
            <person name="Shinagawa A."/>
            <person name="Shinozaki K."/>
        </authorList>
    </citation>
    <scope>NUCLEOTIDE SEQUENCE [LARGE SCALE MRNA] (ISOFORM 2)</scope>
    <source>
        <strain>cv. Columbia</strain>
    </source>
</reference>
<reference key="4">
    <citation type="journal article" date="2004" name="Genome Res.">
        <title>Whole genome sequence comparisons and 'full-length' cDNA sequences: a combined approach to evaluate and improve Arabidopsis genome annotation.</title>
        <authorList>
            <person name="Castelli V."/>
            <person name="Aury J.-M."/>
            <person name="Jaillon O."/>
            <person name="Wincker P."/>
            <person name="Clepet C."/>
            <person name="Menard M."/>
            <person name="Cruaud C."/>
            <person name="Quetier F."/>
            <person name="Scarpelli C."/>
            <person name="Schaechter V."/>
            <person name="Temple G."/>
            <person name="Caboche M."/>
            <person name="Weissenbach J."/>
            <person name="Salanoubat M."/>
        </authorList>
    </citation>
    <scope>NUCLEOTIDE SEQUENCE [LARGE SCALE MRNA] (ISOFORM 2)</scope>
    <source>
        <strain>cv. Columbia</strain>
        <tissue>Silique</tissue>
    </source>
</reference>
<protein>
    <recommendedName>
        <fullName>Putative cytochrome c oxidase subunit 5b-like</fullName>
    </recommendedName>
</protein>
<feature type="chain" id="PRO_0000412473" description="Putative cytochrome c oxidase subunit 5b-like">
    <location>
        <begin position="1"/>
        <end position="90"/>
    </location>
</feature>
<feature type="binding site" evidence="1">
    <location>
        <position position="43"/>
    </location>
    <ligand>
        <name>Zn(2+)</name>
        <dbReference type="ChEBI" id="CHEBI:29105"/>
    </ligand>
</feature>
<feature type="binding site" evidence="1">
    <location>
        <position position="67"/>
    </location>
    <ligand>
        <name>Zn(2+)</name>
        <dbReference type="ChEBI" id="CHEBI:29105"/>
    </ligand>
</feature>
<feature type="binding site" evidence="1">
    <location>
        <position position="70"/>
    </location>
    <ligand>
        <name>Zn(2+)</name>
        <dbReference type="ChEBI" id="CHEBI:29105"/>
    </ligand>
</feature>
<feature type="splice variant" id="VSP_041683" description="In isoform 2." evidence="2 3">
    <original>YSGRRLLDIDHPESPFGTKESPAVVQSYFDKRNIGCRGGEGEDGHDVVWFWLDKGKSFECPVCSQYFEHGPPDGHGDDEDHHH</original>
    <variation>EGGCLTSTTLKVLLVQRNLLLSYSPTLTREISDAVVVKARMDTTSFGSG</variation>
    <location>
        <begin position="8"/>
        <end position="90"/>
    </location>
</feature>
<evidence type="ECO:0000255" key="1">
    <source>
        <dbReference type="PROSITE-ProRule" id="PRU00692"/>
    </source>
</evidence>
<evidence type="ECO:0000303" key="2">
    <source>
    </source>
</evidence>
<evidence type="ECO:0000303" key="3">
    <source>
    </source>
</evidence>
<evidence type="ECO:0000305" key="4"/>
<accession>Q9SSS5</accession>
<accession>F4IEJ9</accession>
<accession>Q8GW54</accession>
<gene>
    <name type="ordered locus">At1g52710</name>
    <name type="ORF">F6D8.4</name>
</gene>
<keyword id="KW-0025">Alternative splicing</keyword>
<keyword id="KW-0479">Metal-binding</keyword>
<keyword id="KW-1185">Reference proteome</keyword>
<keyword id="KW-0862">Zinc</keyword>
<comment type="alternative products">
    <event type="alternative splicing"/>
    <isoform>
        <id>Q9SSS5-1</id>
        <name>1</name>
        <sequence type="displayed"/>
    </isoform>
    <isoform>
        <id>Q9SSS5-2</id>
        <name>2</name>
        <sequence type="described" ref="VSP_041683"/>
    </isoform>
</comment>
<comment type="similarity">
    <text evidence="4">Belongs to the cytochrome c oxidase subunit 5B (TC 3.D.4.11) family.</text>
</comment>
<comment type="sequence caution" evidence="4">
    <conflict type="erroneous gene model prediction">
        <sequence resource="EMBL-CDS" id="AAD55594"/>
    </conflict>
</comment>
<proteinExistence type="inferred from homology"/>
<sequence length="90" mass="10300">MIRLDKEYSGRRLLDIDHPESPFGTKESPAVVQSYFDKRNIGCRGGEGEDGHDVVWFWLDKGKSFECPVCSQYFEHGPPDGHGDDEDHHH</sequence>
<name>CX5BL_ARATH</name>
<dbReference type="EMBL" id="AC008016">
    <property type="protein sequence ID" value="AAD55594.1"/>
    <property type="status" value="ALT_SEQ"/>
    <property type="molecule type" value="Genomic_DNA"/>
</dbReference>
<dbReference type="EMBL" id="CP002684">
    <property type="protein sequence ID" value="AEE32842.1"/>
    <property type="molecule type" value="Genomic_DNA"/>
</dbReference>
<dbReference type="EMBL" id="CP002684">
    <property type="protein sequence ID" value="AEE32843.1"/>
    <property type="molecule type" value="Genomic_DNA"/>
</dbReference>
<dbReference type="EMBL" id="AK119073">
    <property type="protein sequence ID" value="BAC43649.1"/>
    <property type="molecule type" value="mRNA"/>
</dbReference>
<dbReference type="EMBL" id="BX841959">
    <property type="status" value="NOT_ANNOTATED_CDS"/>
    <property type="molecule type" value="mRNA"/>
</dbReference>
<dbReference type="RefSeq" id="NP_001185205.1">
    <molecule id="Q9SSS5-2"/>
    <property type="nucleotide sequence ID" value="NM_001198276.2"/>
</dbReference>
<dbReference type="RefSeq" id="NP_175680.2">
    <molecule id="Q9SSS5-1"/>
    <property type="nucleotide sequence ID" value="NM_104149.2"/>
</dbReference>
<dbReference type="SMR" id="Q9SSS5"/>
<dbReference type="FunCoup" id="Q9SSS5">
    <property type="interactions" value="974"/>
</dbReference>
<dbReference type="STRING" id="3702.Q9SSS5"/>
<dbReference type="PaxDb" id="3702-AT1G52710.1"/>
<dbReference type="EnsemblPlants" id="AT1G52710.1">
    <molecule id="Q9SSS5-1"/>
    <property type="protein sequence ID" value="AT1G52710.1"/>
    <property type="gene ID" value="AT1G52710"/>
</dbReference>
<dbReference type="EnsemblPlants" id="AT1G52710.2">
    <molecule id="Q9SSS5-2"/>
    <property type="protein sequence ID" value="AT1G52710.2"/>
    <property type="gene ID" value="AT1G52710"/>
</dbReference>
<dbReference type="GeneID" id="841704"/>
<dbReference type="Gramene" id="AT1G52710.1">
    <molecule id="Q9SSS5-1"/>
    <property type="protein sequence ID" value="AT1G52710.1"/>
    <property type="gene ID" value="AT1G52710"/>
</dbReference>
<dbReference type="Gramene" id="AT1G52710.2">
    <molecule id="Q9SSS5-2"/>
    <property type="protein sequence ID" value="AT1G52710.2"/>
    <property type="gene ID" value="AT1G52710"/>
</dbReference>
<dbReference type="KEGG" id="ath:AT1G52710"/>
<dbReference type="Araport" id="AT1G52710"/>
<dbReference type="TAIR" id="AT1G52710"/>
<dbReference type="eggNOG" id="KOG3352">
    <property type="taxonomic scope" value="Eukaryota"/>
</dbReference>
<dbReference type="HOGENOM" id="CLU_127178_3_0_1"/>
<dbReference type="InParanoid" id="Q9SSS5"/>
<dbReference type="OMA" id="RECYVEA"/>
<dbReference type="PRO" id="PR:Q9SSS5"/>
<dbReference type="Proteomes" id="UP000006548">
    <property type="component" value="Chromosome 1"/>
</dbReference>
<dbReference type="ExpressionAtlas" id="Q9SSS5">
    <property type="expression patterns" value="baseline and differential"/>
</dbReference>
<dbReference type="GO" id="GO:0005740">
    <property type="term" value="C:mitochondrial envelope"/>
    <property type="evidence" value="ECO:0007669"/>
    <property type="project" value="InterPro"/>
</dbReference>
<dbReference type="GO" id="GO:0045277">
    <property type="term" value="C:respiratory chain complex IV"/>
    <property type="evidence" value="ECO:0007669"/>
    <property type="project" value="InterPro"/>
</dbReference>
<dbReference type="GO" id="GO:0046872">
    <property type="term" value="F:metal ion binding"/>
    <property type="evidence" value="ECO:0007669"/>
    <property type="project" value="UniProtKB-KW"/>
</dbReference>
<dbReference type="GO" id="GO:0006123">
    <property type="term" value="P:mitochondrial electron transport, cytochrome c to oxygen"/>
    <property type="evidence" value="ECO:0007669"/>
    <property type="project" value="InterPro"/>
</dbReference>
<dbReference type="FunFam" id="2.60.11.10:FF:000002">
    <property type="entry name" value="Cytochrome c oxidase subunit Vb"/>
    <property type="match status" value="1"/>
</dbReference>
<dbReference type="Gene3D" id="2.60.11.10">
    <property type="entry name" value="Cytochrome c oxidase, subunit Vb"/>
    <property type="match status" value="1"/>
</dbReference>
<dbReference type="InterPro" id="IPR002124">
    <property type="entry name" value="Cyt_c_oxidase_su5b"/>
</dbReference>
<dbReference type="InterPro" id="IPR036972">
    <property type="entry name" value="Cyt_c_oxidase_su5b_sf"/>
</dbReference>
<dbReference type="PANTHER" id="PTHR10122:SF0">
    <property type="entry name" value="CYTOCHROME C OXIDASE SUBUNIT 5B, ISOFORM A-RELATED"/>
    <property type="match status" value="1"/>
</dbReference>
<dbReference type="PANTHER" id="PTHR10122">
    <property type="entry name" value="CYTOCHROME C OXIDASE SUBUNIT 5B, MITOCHONDRIAL"/>
    <property type="match status" value="1"/>
</dbReference>
<dbReference type="Pfam" id="PF01215">
    <property type="entry name" value="COX5B"/>
    <property type="match status" value="1"/>
</dbReference>
<dbReference type="SUPFAM" id="SSF57802">
    <property type="entry name" value="Rubredoxin-like"/>
    <property type="match status" value="1"/>
</dbReference>
<dbReference type="PROSITE" id="PS51359">
    <property type="entry name" value="COX5B_2"/>
    <property type="match status" value="1"/>
</dbReference>